<comment type="function">
    <text evidence="6">Required for mating and morphogenesis. May contain a cryptic binding site for cdc42 that is enhanced by binding Ras. Interacts directly with scd2. Promotes the exchange of cdc42-bound GDP by GTP. Involved in septation and stimulates the elongation of conjugation tubes.</text>
</comment>
<comment type="subunit">
    <text evidence="6 8">Scd1, scd2, cdc42, and ras1, in its GTP-bound state, act cooperatively to form a protein complex. Interacts with moe1 and cdc42.</text>
</comment>
<comment type="subcellular location">
    <subcellularLocation>
        <location>Nucleus</location>
    </subcellularLocation>
    <subcellularLocation>
        <location>Cytoplasm</location>
    </subcellularLocation>
    <text>Located at the growing cell ends and tips of conjugation tubes.</text>
</comment>
<feature type="chain" id="PRO_0000080973" description="Rho guanine nucleotide exchange factor scd1">
    <location>
        <begin position="1"/>
        <end position="872"/>
    </location>
</feature>
<feature type="domain" description="Calponin-homology (CH)" evidence="1">
    <location>
        <begin position="82"/>
        <end position="198"/>
    </location>
</feature>
<feature type="domain" description="DH" evidence="2">
    <location>
        <begin position="228"/>
        <end position="402"/>
    </location>
</feature>
<feature type="domain" description="PH" evidence="3">
    <location>
        <begin position="426"/>
        <end position="547"/>
    </location>
</feature>
<feature type="domain" description="PB1" evidence="4">
    <location>
        <begin position="772"/>
        <end position="859"/>
    </location>
</feature>
<feature type="region of interest" description="Disordered" evidence="5">
    <location>
        <begin position="1"/>
        <end position="29"/>
    </location>
</feature>
<feature type="region of interest" description="Disordered" evidence="5">
    <location>
        <begin position="553"/>
        <end position="667"/>
    </location>
</feature>
<feature type="region of interest" description="Disordered" evidence="5">
    <location>
        <begin position="743"/>
        <end position="765"/>
    </location>
</feature>
<feature type="compositionally biased region" description="Polar residues" evidence="5">
    <location>
        <begin position="11"/>
        <end position="25"/>
    </location>
</feature>
<feature type="compositionally biased region" description="Polar residues" evidence="5">
    <location>
        <begin position="560"/>
        <end position="584"/>
    </location>
</feature>
<feature type="compositionally biased region" description="Low complexity" evidence="5">
    <location>
        <begin position="599"/>
        <end position="616"/>
    </location>
</feature>
<feature type="compositionally biased region" description="Basic and acidic residues" evidence="5">
    <location>
        <begin position="617"/>
        <end position="633"/>
    </location>
</feature>
<feature type="compositionally biased region" description="Low complexity" evidence="5">
    <location>
        <begin position="645"/>
        <end position="667"/>
    </location>
</feature>
<feature type="compositionally biased region" description="Low complexity" evidence="5">
    <location>
        <begin position="748"/>
        <end position="765"/>
    </location>
</feature>
<feature type="modified residue" description="Phosphoserine" evidence="7">
    <location>
        <position position="583"/>
    </location>
</feature>
<evidence type="ECO:0000255" key="1">
    <source>
        <dbReference type="PROSITE-ProRule" id="PRU00044"/>
    </source>
</evidence>
<evidence type="ECO:0000255" key="2">
    <source>
        <dbReference type="PROSITE-ProRule" id="PRU00062"/>
    </source>
</evidence>
<evidence type="ECO:0000255" key="3">
    <source>
        <dbReference type="PROSITE-ProRule" id="PRU00145"/>
    </source>
</evidence>
<evidence type="ECO:0000255" key="4">
    <source>
        <dbReference type="PROSITE-ProRule" id="PRU01081"/>
    </source>
</evidence>
<evidence type="ECO:0000256" key="5">
    <source>
        <dbReference type="SAM" id="MobiDB-lite"/>
    </source>
</evidence>
<evidence type="ECO:0000269" key="6">
    <source>
    </source>
</evidence>
<evidence type="ECO:0000269" key="7">
    <source>
    </source>
</evidence>
<evidence type="ECO:0000269" key="8">
    <source>
    </source>
</evidence>
<dbReference type="EMBL" id="U12538">
    <property type="protein sequence ID" value="AAA50556.2"/>
    <property type="molecule type" value="Genomic_DNA"/>
</dbReference>
<dbReference type="EMBL" id="CU329670">
    <property type="protein sequence ID" value="CAB11037.1"/>
    <property type="molecule type" value="Genomic_DNA"/>
</dbReference>
<dbReference type="PIR" id="T37789">
    <property type="entry name" value="T37789"/>
</dbReference>
<dbReference type="RefSeq" id="NP_594221.1">
    <property type="nucleotide sequence ID" value="NM_001019644.2"/>
</dbReference>
<dbReference type="SMR" id="P40995"/>
<dbReference type="BioGRID" id="278803">
    <property type="interactions" value="27"/>
</dbReference>
<dbReference type="DIP" id="DIP-44893N"/>
<dbReference type="FunCoup" id="P40995">
    <property type="interactions" value="80"/>
</dbReference>
<dbReference type="IntAct" id="P40995">
    <property type="interactions" value="1"/>
</dbReference>
<dbReference type="STRING" id="284812.P40995"/>
<dbReference type="iPTMnet" id="P40995"/>
<dbReference type="PaxDb" id="4896-SPAC16E8.09.1"/>
<dbReference type="EnsemblFungi" id="SPAC16E8.09.1">
    <property type="protein sequence ID" value="SPAC16E8.09.1:pep"/>
    <property type="gene ID" value="SPAC16E8.09"/>
</dbReference>
<dbReference type="GeneID" id="2542337"/>
<dbReference type="KEGG" id="spo:2542337"/>
<dbReference type="PomBase" id="SPAC16E8.09">
    <property type="gene designation" value="scd1"/>
</dbReference>
<dbReference type="VEuPathDB" id="FungiDB:SPAC16E8.09"/>
<dbReference type="eggNOG" id="KOG3519">
    <property type="taxonomic scope" value="Eukaryota"/>
</dbReference>
<dbReference type="HOGENOM" id="CLU_007879_0_0_1"/>
<dbReference type="InParanoid" id="P40995"/>
<dbReference type="OMA" id="QPIYPRQ"/>
<dbReference type="PhylomeDB" id="P40995"/>
<dbReference type="PRO" id="PR:P40995"/>
<dbReference type="Proteomes" id="UP000002485">
    <property type="component" value="Chromosome I"/>
</dbReference>
<dbReference type="GO" id="GO:0071521">
    <property type="term" value="C:Cdc42 GTPase complex"/>
    <property type="evidence" value="ECO:0000304"/>
    <property type="project" value="PomBase"/>
</dbReference>
<dbReference type="GO" id="GO:0051285">
    <property type="term" value="C:cell cortex of cell tip"/>
    <property type="evidence" value="ECO:0000314"/>
    <property type="project" value="PomBase"/>
</dbReference>
<dbReference type="GO" id="GO:1902716">
    <property type="term" value="C:cell cortex of growing cell tip"/>
    <property type="evidence" value="ECO:0000314"/>
    <property type="project" value="PomBase"/>
</dbReference>
<dbReference type="GO" id="GO:0032153">
    <property type="term" value="C:cell division site"/>
    <property type="evidence" value="ECO:0000314"/>
    <property type="project" value="PomBase"/>
</dbReference>
<dbReference type="GO" id="GO:0051286">
    <property type="term" value="C:cell tip"/>
    <property type="evidence" value="ECO:0000314"/>
    <property type="project" value="PomBase"/>
</dbReference>
<dbReference type="GO" id="GO:0032154">
    <property type="term" value="C:cleavage furrow"/>
    <property type="evidence" value="ECO:0000314"/>
    <property type="project" value="PomBase"/>
</dbReference>
<dbReference type="GO" id="GO:0090726">
    <property type="term" value="C:cortical dynamic polarity patch"/>
    <property type="evidence" value="ECO:0000314"/>
    <property type="project" value="PomBase"/>
</dbReference>
<dbReference type="GO" id="GO:0005737">
    <property type="term" value="C:cytoplasm"/>
    <property type="evidence" value="ECO:0000318"/>
    <property type="project" value="GO_Central"/>
</dbReference>
<dbReference type="GO" id="GO:0005829">
    <property type="term" value="C:cytosol"/>
    <property type="evidence" value="ECO:0007005"/>
    <property type="project" value="PomBase"/>
</dbReference>
<dbReference type="GO" id="GO:0000935">
    <property type="term" value="C:division septum"/>
    <property type="evidence" value="ECO:0000314"/>
    <property type="project" value="PomBase"/>
</dbReference>
<dbReference type="GO" id="GO:0043332">
    <property type="term" value="C:mating projection tip"/>
    <property type="evidence" value="ECO:0000314"/>
    <property type="project" value="PomBase"/>
</dbReference>
<dbReference type="GO" id="GO:0072686">
    <property type="term" value="C:mitotic spindle"/>
    <property type="evidence" value="ECO:0000314"/>
    <property type="project" value="PomBase"/>
</dbReference>
<dbReference type="GO" id="GO:0005634">
    <property type="term" value="C:nucleus"/>
    <property type="evidence" value="ECO:0000314"/>
    <property type="project" value="PomBase"/>
</dbReference>
<dbReference type="GO" id="GO:0031520">
    <property type="term" value="C:plasma membrane of cell tip"/>
    <property type="evidence" value="ECO:0000269"/>
    <property type="project" value="PomBase"/>
</dbReference>
<dbReference type="GO" id="GO:0030427">
    <property type="term" value="C:site of polarized growth"/>
    <property type="evidence" value="ECO:0000314"/>
    <property type="project" value="PomBase"/>
</dbReference>
<dbReference type="GO" id="GO:0005085">
    <property type="term" value="F:guanyl-nucleotide exchange factor activity"/>
    <property type="evidence" value="ECO:0000269"/>
    <property type="project" value="PomBase"/>
</dbReference>
<dbReference type="GO" id="GO:0008289">
    <property type="term" value="F:lipid binding"/>
    <property type="evidence" value="ECO:0000255"/>
    <property type="project" value="PomBase"/>
</dbReference>
<dbReference type="GO" id="GO:0051519">
    <property type="term" value="P:activation of bipolar cell growth"/>
    <property type="evidence" value="ECO:0000315"/>
    <property type="project" value="PomBase"/>
</dbReference>
<dbReference type="GO" id="GO:0000917">
    <property type="term" value="P:division septum assembly"/>
    <property type="evidence" value="ECO:0007669"/>
    <property type="project" value="UniProtKB-KW"/>
</dbReference>
<dbReference type="GO" id="GO:0030010">
    <property type="term" value="P:establishment of cell polarity"/>
    <property type="evidence" value="ECO:0000315"/>
    <property type="project" value="PomBase"/>
</dbReference>
<dbReference type="GO" id="GO:0061245">
    <property type="term" value="P:establishment or maintenance of bipolar cell polarity"/>
    <property type="evidence" value="ECO:0000316"/>
    <property type="project" value="PomBase"/>
</dbReference>
<dbReference type="GO" id="GO:0035556">
    <property type="term" value="P:intracellular signal transduction"/>
    <property type="evidence" value="ECO:0007669"/>
    <property type="project" value="InterPro"/>
</dbReference>
<dbReference type="GO" id="GO:1902917">
    <property type="term" value="P:positive regulation of mating projection assembly"/>
    <property type="evidence" value="ECO:0000315"/>
    <property type="project" value="PomBase"/>
</dbReference>
<dbReference type="GO" id="GO:0140281">
    <property type="term" value="P:positive regulation of mitotic division septum assembly"/>
    <property type="evidence" value="ECO:0000315"/>
    <property type="project" value="PomBase"/>
</dbReference>
<dbReference type="GO" id="GO:0031137">
    <property type="term" value="P:regulation of conjugation with cellular fusion"/>
    <property type="evidence" value="ECO:0000315"/>
    <property type="project" value="PomBase"/>
</dbReference>
<dbReference type="GO" id="GO:0032955">
    <property type="term" value="P:regulation of division septum assembly"/>
    <property type="evidence" value="ECO:0000316"/>
    <property type="project" value="PomBase"/>
</dbReference>
<dbReference type="GO" id="GO:0030100">
    <property type="term" value="P:regulation of endocytosis"/>
    <property type="evidence" value="ECO:0000315"/>
    <property type="project" value="PomBase"/>
</dbReference>
<dbReference type="GO" id="GO:0060236">
    <property type="term" value="P:regulation of mitotic spindle organization"/>
    <property type="evidence" value="ECO:0000315"/>
    <property type="project" value="PomBase"/>
</dbReference>
<dbReference type="GO" id="GO:0031106">
    <property type="term" value="P:septin ring organization"/>
    <property type="evidence" value="ECO:0000318"/>
    <property type="project" value="GO_Central"/>
</dbReference>
<dbReference type="CDD" id="cd05992">
    <property type="entry name" value="PB1"/>
    <property type="match status" value="1"/>
</dbReference>
<dbReference type="CDD" id="cd13246">
    <property type="entry name" value="PH_Scd1"/>
    <property type="match status" value="1"/>
</dbReference>
<dbReference type="CDD" id="cd00160">
    <property type="entry name" value="RhoGEF"/>
    <property type="match status" value="1"/>
</dbReference>
<dbReference type="FunFam" id="3.10.20.90:FF:000176">
    <property type="entry name" value="Rho guanyl nucleotide exchange factor"/>
    <property type="match status" value="1"/>
</dbReference>
<dbReference type="Gene3D" id="1.20.900.10">
    <property type="entry name" value="Dbl homology (DH) domain"/>
    <property type="match status" value="1"/>
</dbReference>
<dbReference type="Gene3D" id="3.10.20.90">
    <property type="entry name" value="Phosphatidylinositol 3-kinase Catalytic Subunit, Chain A, domain 1"/>
    <property type="match status" value="1"/>
</dbReference>
<dbReference type="Gene3D" id="2.30.29.30">
    <property type="entry name" value="Pleckstrin-homology domain (PH domain)/Phosphotyrosine-binding domain (PTB)"/>
    <property type="match status" value="1"/>
</dbReference>
<dbReference type="InterPro" id="IPR010481">
    <property type="entry name" value="Cdc24/Scd1_N"/>
</dbReference>
<dbReference type="InterPro" id="IPR033511">
    <property type="entry name" value="Cdc24/Scd1_PH_dom"/>
</dbReference>
<dbReference type="InterPro" id="IPR053026">
    <property type="entry name" value="CDC42_GEF"/>
</dbReference>
<dbReference type="InterPro" id="IPR001715">
    <property type="entry name" value="CH_dom"/>
</dbReference>
<dbReference type="InterPro" id="IPR035899">
    <property type="entry name" value="DBL_dom_sf"/>
</dbReference>
<dbReference type="InterPro" id="IPR000219">
    <property type="entry name" value="DH_dom"/>
</dbReference>
<dbReference type="InterPro" id="IPR001331">
    <property type="entry name" value="GDS_CDC24_CS"/>
</dbReference>
<dbReference type="InterPro" id="IPR053793">
    <property type="entry name" value="PB1-like"/>
</dbReference>
<dbReference type="InterPro" id="IPR000270">
    <property type="entry name" value="PB1_dom"/>
</dbReference>
<dbReference type="InterPro" id="IPR011993">
    <property type="entry name" value="PH-like_dom_sf"/>
</dbReference>
<dbReference type="InterPro" id="IPR001849">
    <property type="entry name" value="PH_domain"/>
</dbReference>
<dbReference type="PANTHER" id="PTHR47339">
    <property type="entry name" value="CELL DIVISION CONTROL PROTEIN 24"/>
    <property type="match status" value="1"/>
</dbReference>
<dbReference type="PANTHER" id="PTHR47339:SF1">
    <property type="entry name" value="CELL DIVISION CONTROL PROTEIN 24"/>
    <property type="match status" value="1"/>
</dbReference>
<dbReference type="Pfam" id="PF06395">
    <property type="entry name" value="CDC24"/>
    <property type="match status" value="1"/>
</dbReference>
<dbReference type="Pfam" id="PF00564">
    <property type="entry name" value="PB1"/>
    <property type="match status" value="1"/>
</dbReference>
<dbReference type="Pfam" id="PF15411">
    <property type="entry name" value="PH_10"/>
    <property type="match status" value="1"/>
</dbReference>
<dbReference type="Pfam" id="PF00621">
    <property type="entry name" value="RhoGEF"/>
    <property type="match status" value="1"/>
</dbReference>
<dbReference type="SMART" id="SM00666">
    <property type="entry name" value="PB1"/>
    <property type="match status" value="1"/>
</dbReference>
<dbReference type="SMART" id="SM00233">
    <property type="entry name" value="PH"/>
    <property type="match status" value="1"/>
</dbReference>
<dbReference type="SMART" id="SM00325">
    <property type="entry name" value="RhoGEF"/>
    <property type="match status" value="1"/>
</dbReference>
<dbReference type="SUPFAM" id="SSF54277">
    <property type="entry name" value="CAD &amp; PB1 domains"/>
    <property type="match status" value="1"/>
</dbReference>
<dbReference type="SUPFAM" id="SSF48065">
    <property type="entry name" value="DBL homology domain (DH-domain)"/>
    <property type="match status" value="1"/>
</dbReference>
<dbReference type="SUPFAM" id="SSF50729">
    <property type="entry name" value="PH domain-like"/>
    <property type="match status" value="1"/>
</dbReference>
<dbReference type="PROSITE" id="PS50021">
    <property type="entry name" value="CH"/>
    <property type="match status" value="1"/>
</dbReference>
<dbReference type="PROSITE" id="PS00741">
    <property type="entry name" value="DH_1"/>
    <property type="match status" value="1"/>
</dbReference>
<dbReference type="PROSITE" id="PS50010">
    <property type="entry name" value="DH_2"/>
    <property type="match status" value="1"/>
</dbReference>
<dbReference type="PROSITE" id="PS51745">
    <property type="entry name" value="PB1"/>
    <property type="match status" value="1"/>
</dbReference>
<dbReference type="PROSITE" id="PS50003">
    <property type="entry name" value="PH_DOMAIN"/>
    <property type="match status" value="1"/>
</dbReference>
<protein>
    <recommendedName>
        <fullName>Rho guanine nucleotide exchange factor scd1</fullName>
    </recommendedName>
</protein>
<reference key="1">
    <citation type="journal article" date="1994" name="Cell">
        <title>Cooperative interaction of S. pombe proteins required for mating and morphogenesis.</title>
        <authorList>
            <person name="Chang E.C."/>
            <person name="Barr M."/>
            <person name="Wang Y."/>
            <person name="Jung V."/>
            <person name="Xu H.-P."/>
            <person name="Wigler M.H."/>
        </authorList>
    </citation>
    <scope>NUCLEOTIDE SEQUENCE [GENOMIC DNA]</scope>
    <source>
        <strain>SP870</strain>
    </source>
</reference>
<reference key="2">
    <citation type="journal article" date="2002" name="Nature">
        <title>The genome sequence of Schizosaccharomyces pombe.</title>
        <authorList>
            <person name="Wood V."/>
            <person name="Gwilliam R."/>
            <person name="Rajandream M.A."/>
            <person name="Lyne M.H."/>
            <person name="Lyne R."/>
            <person name="Stewart A."/>
            <person name="Sgouros J.G."/>
            <person name="Peat N."/>
            <person name="Hayles J."/>
            <person name="Baker S.G."/>
            <person name="Basham D."/>
            <person name="Bowman S."/>
            <person name="Brooks K."/>
            <person name="Brown D."/>
            <person name="Brown S."/>
            <person name="Chillingworth T."/>
            <person name="Churcher C.M."/>
            <person name="Collins M."/>
            <person name="Connor R."/>
            <person name="Cronin A."/>
            <person name="Davis P."/>
            <person name="Feltwell T."/>
            <person name="Fraser A."/>
            <person name="Gentles S."/>
            <person name="Goble A."/>
            <person name="Hamlin N."/>
            <person name="Harris D.E."/>
            <person name="Hidalgo J."/>
            <person name="Hodgson G."/>
            <person name="Holroyd S."/>
            <person name="Hornsby T."/>
            <person name="Howarth S."/>
            <person name="Huckle E.J."/>
            <person name="Hunt S."/>
            <person name="Jagels K."/>
            <person name="James K.D."/>
            <person name="Jones L."/>
            <person name="Jones M."/>
            <person name="Leather S."/>
            <person name="McDonald S."/>
            <person name="McLean J."/>
            <person name="Mooney P."/>
            <person name="Moule S."/>
            <person name="Mungall K.L."/>
            <person name="Murphy L.D."/>
            <person name="Niblett D."/>
            <person name="Odell C."/>
            <person name="Oliver K."/>
            <person name="O'Neil S."/>
            <person name="Pearson D."/>
            <person name="Quail M.A."/>
            <person name="Rabbinowitsch E."/>
            <person name="Rutherford K.M."/>
            <person name="Rutter S."/>
            <person name="Saunders D."/>
            <person name="Seeger K."/>
            <person name="Sharp S."/>
            <person name="Skelton J."/>
            <person name="Simmonds M.N."/>
            <person name="Squares R."/>
            <person name="Squares S."/>
            <person name="Stevens K."/>
            <person name="Taylor K."/>
            <person name="Taylor R.G."/>
            <person name="Tivey A."/>
            <person name="Walsh S.V."/>
            <person name="Warren T."/>
            <person name="Whitehead S."/>
            <person name="Woodward J.R."/>
            <person name="Volckaert G."/>
            <person name="Aert R."/>
            <person name="Robben J."/>
            <person name="Grymonprez B."/>
            <person name="Weltjens I."/>
            <person name="Vanstreels E."/>
            <person name="Rieger M."/>
            <person name="Schaefer M."/>
            <person name="Mueller-Auer S."/>
            <person name="Gabel C."/>
            <person name="Fuchs M."/>
            <person name="Duesterhoeft A."/>
            <person name="Fritzc C."/>
            <person name="Holzer E."/>
            <person name="Moestl D."/>
            <person name="Hilbert H."/>
            <person name="Borzym K."/>
            <person name="Langer I."/>
            <person name="Beck A."/>
            <person name="Lehrach H."/>
            <person name="Reinhardt R."/>
            <person name="Pohl T.M."/>
            <person name="Eger P."/>
            <person name="Zimmermann W."/>
            <person name="Wedler H."/>
            <person name="Wambutt R."/>
            <person name="Purnelle B."/>
            <person name="Goffeau A."/>
            <person name="Cadieu E."/>
            <person name="Dreano S."/>
            <person name="Gloux S."/>
            <person name="Lelaure V."/>
            <person name="Mottier S."/>
            <person name="Galibert F."/>
            <person name="Aves S.J."/>
            <person name="Xiang Z."/>
            <person name="Hunt C."/>
            <person name="Moore K."/>
            <person name="Hurst S.M."/>
            <person name="Lucas M."/>
            <person name="Rochet M."/>
            <person name="Gaillardin C."/>
            <person name="Tallada V.A."/>
            <person name="Garzon A."/>
            <person name="Thode G."/>
            <person name="Daga R.R."/>
            <person name="Cruzado L."/>
            <person name="Jimenez J."/>
            <person name="Sanchez M."/>
            <person name="del Rey F."/>
            <person name="Benito J."/>
            <person name="Dominguez A."/>
            <person name="Revuelta J.L."/>
            <person name="Moreno S."/>
            <person name="Armstrong J."/>
            <person name="Forsburg S.L."/>
            <person name="Cerutti L."/>
            <person name="Lowe T."/>
            <person name="McCombie W.R."/>
            <person name="Paulsen I."/>
            <person name="Potashkin J."/>
            <person name="Shpakovski G.V."/>
            <person name="Ussery D."/>
            <person name="Barrell B.G."/>
            <person name="Nurse P."/>
        </authorList>
    </citation>
    <scope>NUCLEOTIDE SEQUENCE [LARGE SCALE GENOMIC DNA]</scope>
    <source>
        <strain>972 / ATCC 24843</strain>
    </source>
</reference>
<reference key="3">
    <citation type="journal article" date="1999" name="Proc. Natl. Acad. Sci. U.S.A.">
        <title>Moe1, a conserved protein in Schizosaccharomyces pombe, interacts with a Ras effector, Scd1, to affect proper spindle formation.</title>
        <authorList>
            <person name="Chen C.-R."/>
            <person name="Li Y.-C."/>
            <person name="Chen J."/>
            <person name="Hou M.-C."/>
            <person name="Papadaki P."/>
            <person name="Chang E.C."/>
        </authorList>
    </citation>
    <scope>INTERACTION WITH MOE1</scope>
    <scope>SUBCELLULAR LOCATION</scope>
</reference>
<reference key="4">
    <citation type="journal article" date="2003" name="Mol. Biol. Cell">
        <title>Gef1p and Scd1p, the Two GDP-GTP exchange factors for Cdc42p, form a ring structure that shrinks during cytokinesis in Schizosaccharomyces pombe.</title>
        <authorList>
            <person name="Hirota K."/>
            <person name="Tanaka K."/>
            <person name="Ohta K."/>
            <person name="Yamamoto M."/>
        </authorList>
    </citation>
    <scope>FUNCTION</scope>
    <scope>INTERACTION WITH CDC42</scope>
    <scope>SUBCELLULAR LOCATION</scope>
</reference>
<reference key="5">
    <citation type="journal article" date="2008" name="J. Proteome Res.">
        <title>Phosphoproteome analysis of fission yeast.</title>
        <authorList>
            <person name="Wilson-Grady J.T."/>
            <person name="Villen J."/>
            <person name="Gygi S.P."/>
        </authorList>
    </citation>
    <scope>PHOSPHORYLATION [LARGE SCALE ANALYSIS] AT SER-583</scope>
    <scope>IDENTIFICATION BY MASS SPECTROMETRY</scope>
</reference>
<name>SCD1_SCHPO</name>
<organism>
    <name type="scientific">Schizosaccharomyces pombe (strain 972 / ATCC 24843)</name>
    <name type="common">Fission yeast</name>
    <dbReference type="NCBI Taxonomy" id="284812"/>
    <lineage>
        <taxon>Eukaryota</taxon>
        <taxon>Fungi</taxon>
        <taxon>Dikarya</taxon>
        <taxon>Ascomycota</taxon>
        <taxon>Taphrinomycotina</taxon>
        <taxon>Schizosaccharomycetes</taxon>
        <taxon>Schizosaccharomycetales</taxon>
        <taxon>Schizosaccharomycetaceae</taxon>
        <taxon>Schizosaccharomyces</taxon>
    </lineage>
</organism>
<keyword id="KW-0131">Cell cycle</keyword>
<keyword id="KW-0132">Cell division</keyword>
<keyword id="KW-0963">Cytoplasm</keyword>
<keyword id="KW-0344">Guanine-nucleotide releasing factor</keyword>
<keyword id="KW-0539">Nucleus</keyword>
<keyword id="KW-0597">Phosphoprotein</keyword>
<keyword id="KW-1185">Reference proteome</keyword>
<keyword id="KW-0717">Septation</keyword>
<sequence>MAYFQDRKTSSRSLPSYINHSTQNLVGPRKDETNLSEYMKLRLLQSPSQVIYNLENTVSLYRRCLNLRKRLMDISELAAFFDSIHREALNSSFKILEFKDIEFDDPVTEIWLFCRLGYPLCALFNCLPVKQKLEVNSSVSLENTNVCKASLYRFMLMCKNELGLTDAALFSISEIYKPSTAPLVRALQTIELLLKKYEVSNTTKSSSTPSPSTDDNVPTGTLNSLIASGRRVTAELYETELKYIQDLEYLSNYMVILQQKQILSQDTILSIFTNLNEILDFQRRFLVGLEMNLSLPVEEQRLGALFIALEEGFSVYQVFCTNFPNAQQLIIDNQNQLLKVANLLEPSYELPALLIKPIQRICKYPLLLNQLLKGTPSGYQYEEELKQGMACVVRVANQVNETRRIHENRNAIIELEQRVIDWKGYSLQYFGQLLVWDVVNVCKADIEREYHVYLFEKILLCCKEMSTLKRQARSISMNKKTKRLDSLQLKGRILTSNITTVVPNHHMGSYAIQIFWRGDPQHESFILKLRNEESHKLWMSVLNRLLWKNEHGSPKDIRSAASTPANPVYNRSSSQTSKGYNSSDYDLLRTHSLDENVNSPTSISSPSSKSSPFTKTTSKDTKSATTTDERPSDFIRLNSEESVGTSSLRTSQTTSTIVSNDSSSTASIPSQISRISQVNSLLNDYNYNRQSHITRVYSGTDDGSSVSIFEDTSSSTKQKIFDQPTTNDCDVMRPRQYSYSAGMKSDGSLLPSTKHTSLSSSSTSTSLSVRNTTNVKIRLRLHEVSLVLVVAHDITFDELLAKVEHKIKLCGILKQAVPFRVRLKYVDEDGDFITITSDEDVLMAFETCTFELMDPVHNKGMDTVSLHVVVYF</sequence>
<proteinExistence type="evidence at protein level"/>
<gene>
    <name type="primary">scd1</name>
    <name type="synonym">ral1</name>
    <name type="ORF">SPAC16E8.09</name>
</gene>
<accession>P40995</accession>